<gene>
    <name type="primary">epsC</name>
</gene>
<sequence>MKKVLVVFGTRPEAIKMAPLVKALQADASLQCGVCVTAQHREMLDQVLRLFDIRPDYDLNVMKPGQDLYELTSNILTGVKSVLESFEPDLVLVHGDTSTTLATTLAAYYKQVPVGHIEAGLRTGNLYSPWPEEVNRKVTGSLAALHFAPTERSRRNLLNEGVPADAVVVTGNTVIDALLSVRQRLQTDTALCRNTASLIPYNIGERRIVLVTGHRRESFGDGFERICSTLTSIARAHPDVDIVYPVHLNPNVREPVGRLLKGIANIHLIEPLDYLPFVYLMDKAHIILTDSGGIQEEAPSLGKPVLVMRDTTERPEAVEAGTVRLVGTSVDALVDSATALLNDDSAYEAMSRAHNPYGDGAASARITRAIQAYFA</sequence>
<dbReference type="EC" id="5.1.3.14"/>
<dbReference type="EMBL" id="U17898">
    <property type="protein sequence ID" value="AAA91626.1"/>
    <property type="status" value="ALT_INIT"/>
    <property type="molecule type" value="Genomic_DNA"/>
</dbReference>
<dbReference type="SMR" id="P52641"/>
<dbReference type="UniPathway" id="UPA00821"/>
<dbReference type="GO" id="GO:0005737">
    <property type="term" value="C:cytoplasm"/>
    <property type="evidence" value="ECO:0007669"/>
    <property type="project" value="UniProtKB-SubCell"/>
</dbReference>
<dbReference type="GO" id="GO:0008761">
    <property type="term" value="F:UDP-N-acetylglucosamine 2-epimerase activity"/>
    <property type="evidence" value="ECO:0007669"/>
    <property type="project" value="UniProtKB-EC"/>
</dbReference>
<dbReference type="GO" id="GO:0009103">
    <property type="term" value="P:lipopolysaccharide biosynthetic process"/>
    <property type="evidence" value="ECO:0007669"/>
    <property type="project" value="UniProtKB-KW"/>
</dbReference>
<dbReference type="CDD" id="cd03786">
    <property type="entry name" value="GTB_UDP-GlcNAc_2-Epimerase"/>
    <property type="match status" value="1"/>
</dbReference>
<dbReference type="FunFam" id="3.40.50.2000:FF:000043">
    <property type="entry name" value="UDP-N-acetylglucosamine 2-epimerase"/>
    <property type="match status" value="1"/>
</dbReference>
<dbReference type="Gene3D" id="3.40.50.2000">
    <property type="entry name" value="Glycogen Phosphorylase B"/>
    <property type="match status" value="2"/>
</dbReference>
<dbReference type="InterPro" id="IPR003331">
    <property type="entry name" value="UDP_GlcNAc_Epimerase_2_dom"/>
</dbReference>
<dbReference type="InterPro" id="IPR029767">
    <property type="entry name" value="WecB-like"/>
</dbReference>
<dbReference type="NCBIfam" id="TIGR00236">
    <property type="entry name" value="wecB"/>
    <property type="match status" value="1"/>
</dbReference>
<dbReference type="PANTHER" id="PTHR43174">
    <property type="entry name" value="UDP-N-ACETYLGLUCOSAMINE 2-EPIMERASE"/>
    <property type="match status" value="1"/>
</dbReference>
<dbReference type="PANTHER" id="PTHR43174:SF2">
    <property type="entry name" value="UDP-N-ACETYLGLUCOSAMINE 2-EPIMERASE"/>
    <property type="match status" value="1"/>
</dbReference>
<dbReference type="Pfam" id="PF02350">
    <property type="entry name" value="Epimerase_2"/>
    <property type="match status" value="1"/>
</dbReference>
<dbReference type="SUPFAM" id="SSF53756">
    <property type="entry name" value="UDP-Glycosyltransferase/glycogen phosphorylase"/>
    <property type="match status" value="1"/>
</dbReference>
<protein>
    <recommendedName>
        <fullName>Probable UDP-N-acetylglucosamine 2-epimerase</fullName>
        <ecNumber>5.1.3.14</ecNumber>
    </recommendedName>
    <alternativeName>
        <fullName>UDP-GlcNAc-2-epimerase</fullName>
    </alternativeName>
</protein>
<reference key="1">
    <citation type="journal article" date="1995" name="Mol. Microbiol.">
        <title>Molecular characterization of the eps gene cluster of Pseudomonas solanacearum and its transcriptional regulation at a single promoter.</title>
        <authorList>
            <person name="Huang J."/>
            <person name="Schell M."/>
        </authorList>
    </citation>
    <scope>NUCLEOTIDE SEQUENCE [GENOMIC DNA]</scope>
    <source>
        <strain>AW</strain>
    </source>
</reference>
<accession>P52641</accession>
<organism>
    <name type="scientific">Ralstonia solanacearum</name>
    <name type="common">Pseudomonas solanacearum</name>
    <dbReference type="NCBI Taxonomy" id="305"/>
    <lineage>
        <taxon>Bacteria</taxon>
        <taxon>Pseudomonadati</taxon>
        <taxon>Pseudomonadota</taxon>
        <taxon>Betaproteobacteria</taxon>
        <taxon>Burkholderiales</taxon>
        <taxon>Burkholderiaceae</taxon>
        <taxon>Ralstonia</taxon>
        <taxon>Ralstonia solanacearum species complex</taxon>
    </lineage>
</organism>
<proteinExistence type="inferred from homology"/>
<feature type="chain" id="PRO_0000208525" description="Probable UDP-N-acetylglucosamine 2-epimerase">
    <location>
        <begin position="1"/>
        <end position="375"/>
    </location>
</feature>
<evidence type="ECO:0000305" key="1"/>
<keyword id="KW-0963">Cytoplasm</keyword>
<keyword id="KW-0413">Isomerase</keyword>
<keyword id="KW-0448">Lipopolysaccharide biosynthesis</keyword>
<keyword id="KW-0843">Virulence</keyword>
<name>EPSC_RALSL</name>
<comment type="function">
    <text>May be involved in synthesis of N-acetyltrideoxygalactose, a component of exopolysaccharide EPS I which functions as a virulence factor.</text>
</comment>
<comment type="catalytic activity">
    <reaction>
        <text>UDP-N-acetyl-alpha-D-glucosamine = UDP-N-acetyl-alpha-D-mannosamine</text>
        <dbReference type="Rhea" id="RHEA:17213"/>
        <dbReference type="ChEBI" id="CHEBI:57705"/>
        <dbReference type="ChEBI" id="CHEBI:68623"/>
        <dbReference type="EC" id="5.1.3.14"/>
    </reaction>
</comment>
<comment type="pathway">
    <text>Glycan metabolism; exopolysaccharide EPS I biosynthesis.</text>
</comment>
<comment type="subcellular location">
    <subcellularLocation>
        <location>Cytoplasm</location>
    </subcellularLocation>
</comment>
<comment type="similarity">
    <text evidence="1">Belongs to the UDP-N-acetylglucosamine 2-epimerase family.</text>
</comment>
<comment type="sequence caution" evidence="1">
    <conflict type="erroneous initiation">
        <sequence resource="EMBL-CDS" id="AAA91626"/>
    </conflict>
</comment>